<protein>
    <recommendedName>
        <fullName>Cytochrome c6</fullName>
    </recommendedName>
    <alternativeName>
        <fullName>Cytochrome c-553</fullName>
    </alternativeName>
    <alternativeName>
        <fullName>Cytochrome c553</fullName>
    </alternativeName>
    <alternativeName>
        <fullName>Soluble cytochrome f</fullName>
    </alternativeName>
</protein>
<comment type="function">
    <text>Functions as an electron carrier between membrane-bound cytochrome b6-f and photosystem I in oxygenic photosynthesis.</text>
</comment>
<comment type="subunit">
    <text evidence="1">Monomer.</text>
</comment>
<comment type="subcellular location">
    <subcellularLocation>
        <location>Plastid</location>
        <location>Chloroplast thylakoid lumen</location>
    </subcellularLocation>
</comment>
<comment type="PTM">
    <text>Binds 1 heme c group covalently per subunit.</text>
</comment>
<comment type="similarity">
    <text evidence="2">Belongs to the cytochrome c family. PetJ subfamily.</text>
</comment>
<proteinExistence type="evidence at protein level"/>
<accession>P00110</accession>
<evidence type="ECO:0000250" key="1"/>
<evidence type="ECO:0000305" key="2"/>
<feature type="chain" id="PRO_0000208673" description="Cytochrome c6">
    <location>
        <begin position="1"/>
        <end position="86"/>
    </location>
</feature>
<feature type="binding site" description="covalent" evidence="1">
    <location>
        <position position="14"/>
    </location>
    <ligand>
        <name>heme c</name>
        <dbReference type="ChEBI" id="CHEBI:61717"/>
    </ligand>
</feature>
<feature type="binding site" description="covalent" evidence="1">
    <location>
        <position position="17"/>
    </location>
    <ligand>
        <name>heme c</name>
        <dbReference type="ChEBI" id="CHEBI:61717"/>
    </ligand>
</feature>
<feature type="binding site" description="axial binding residue" evidence="1">
    <location>
        <position position="18"/>
    </location>
    <ligand>
        <name>heme c</name>
        <dbReference type="ChEBI" id="CHEBI:61717"/>
    </ligand>
    <ligandPart>
        <name>Fe</name>
        <dbReference type="ChEBI" id="CHEBI:18248"/>
    </ligandPart>
</feature>
<feature type="binding site" description="axial binding residue" evidence="1">
    <location>
        <position position="58"/>
    </location>
    <ligand>
        <name>heme c</name>
        <dbReference type="ChEBI" id="CHEBI:61717"/>
    </ligand>
    <ligandPart>
        <name>Fe</name>
        <dbReference type="ChEBI" id="CHEBI:18248"/>
    </ligandPart>
</feature>
<organism>
    <name type="scientific">Bumilleriopsis filiformis</name>
    <name type="common">Yellow-green alga</name>
    <dbReference type="NCBI Taxonomy" id="2835"/>
    <lineage>
        <taxon>Eukaryota</taxon>
        <taxon>Sar</taxon>
        <taxon>Stramenopiles</taxon>
        <taxon>Ochrophyta</taxon>
        <taxon>PX clade</taxon>
        <taxon>Xanthophyceae</taxon>
        <taxon>Mischococcales</taxon>
        <taxon>Centritractaceae</taxon>
        <taxon>Bumilleriopsis</taxon>
    </lineage>
</organism>
<reference key="1">
    <citation type="book" date="1980" name="The evolution of protein structure and function">
        <editorList>
            <person name="Sigman D.S."/>
            <person name="Brazier M.A.B."/>
        </editorList>
        <authorList>
            <person name="Dickerson R.E."/>
        </authorList>
    </citation>
    <scope>PROTEIN SEQUENCE</scope>
</reference>
<name>CYC6_BUMFI</name>
<sequence length="86" mass="9121">ADIENGERIFTANCAACHAGGNNVIMPEKTLKKDALEANGMNAVSAITYQVTNGKNAMPAFGGRLSDSDIEDVANYVLSQSEQGWD</sequence>
<gene>
    <name type="primary">petJ</name>
</gene>
<keyword id="KW-0150">Chloroplast</keyword>
<keyword id="KW-0903">Direct protein sequencing</keyword>
<keyword id="KW-0249">Electron transport</keyword>
<keyword id="KW-0349">Heme</keyword>
<keyword id="KW-0408">Iron</keyword>
<keyword id="KW-0479">Metal-binding</keyword>
<keyword id="KW-0602">Photosynthesis</keyword>
<keyword id="KW-0934">Plastid</keyword>
<keyword id="KW-0793">Thylakoid</keyword>
<keyword id="KW-0813">Transport</keyword>
<dbReference type="PIR" id="A00102">
    <property type="entry name" value="CCBF6"/>
</dbReference>
<dbReference type="SMR" id="P00110"/>
<dbReference type="GO" id="GO:0009543">
    <property type="term" value="C:chloroplast thylakoid lumen"/>
    <property type="evidence" value="ECO:0007669"/>
    <property type="project" value="UniProtKB-SubCell"/>
</dbReference>
<dbReference type="GO" id="GO:0009055">
    <property type="term" value="F:electron transfer activity"/>
    <property type="evidence" value="ECO:0007669"/>
    <property type="project" value="InterPro"/>
</dbReference>
<dbReference type="GO" id="GO:0020037">
    <property type="term" value="F:heme binding"/>
    <property type="evidence" value="ECO:0007669"/>
    <property type="project" value="InterPro"/>
</dbReference>
<dbReference type="GO" id="GO:0005506">
    <property type="term" value="F:iron ion binding"/>
    <property type="evidence" value="ECO:0007669"/>
    <property type="project" value="InterPro"/>
</dbReference>
<dbReference type="GO" id="GO:0015979">
    <property type="term" value="P:photosynthesis"/>
    <property type="evidence" value="ECO:0007669"/>
    <property type="project" value="UniProtKB-KW"/>
</dbReference>
<dbReference type="FunFam" id="1.10.760.10:FF:000038">
    <property type="entry name" value="Cytochrome c6"/>
    <property type="match status" value="1"/>
</dbReference>
<dbReference type="Gene3D" id="1.10.760.10">
    <property type="entry name" value="Cytochrome c-like domain"/>
    <property type="match status" value="1"/>
</dbReference>
<dbReference type="HAMAP" id="MF_00594">
    <property type="entry name" value="Cytc_PetJ"/>
    <property type="match status" value="1"/>
</dbReference>
<dbReference type="InterPro" id="IPR009056">
    <property type="entry name" value="Cyt_c-like_dom"/>
</dbReference>
<dbReference type="InterPro" id="IPR036909">
    <property type="entry name" value="Cyt_c-like_dom_sf"/>
</dbReference>
<dbReference type="InterPro" id="IPR023655">
    <property type="entry name" value="Cyt_C6"/>
</dbReference>
<dbReference type="InterPro" id="IPR008168">
    <property type="entry name" value="Cyt_C_IC"/>
</dbReference>
<dbReference type="NCBIfam" id="NF045930">
    <property type="entry name" value="Cytc6PetJCyano"/>
    <property type="match status" value="1"/>
</dbReference>
<dbReference type="PANTHER" id="PTHR34688">
    <property type="entry name" value="CYTOCHROME C6, CHLOROPLASTIC"/>
    <property type="match status" value="1"/>
</dbReference>
<dbReference type="PANTHER" id="PTHR34688:SF2">
    <property type="entry name" value="CYTOCHROME C6, CHLOROPLASTIC"/>
    <property type="match status" value="1"/>
</dbReference>
<dbReference type="Pfam" id="PF13442">
    <property type="entry name" value="Cytochrome_CBB3"/>
    <property type="match status" value="1"/>
</dbReference>
<dbReference type="PRINTS" id="PR00605">
    <property type="entry name" value="CYTCHROMECIC"/>
</dbReference>
<dbReference type="SUPFAM" id="SSF46626">
    <property type="entry name" value="Cytochrome c"/>
    <property type="match status" value="1"/>
</dbReference>
<dbReference type="PROSITE" id="PS51007">
    <property type="entry name" value="CYTC"/>
    <property type="match status" value="1"/>
</dbReference>